<sequence length="499" mass="54409">MRSSLAPAIRLMQSVSRDSCYRGFIIVMTFLFYTCYHLSRKPISIVKGQLHRNCSALPNPPNISENDTTWCSWAPFENTNYKELLGSLDTAFLVSYAIGMFFSGIFGERLPLRYYLSGGMIISGIFTSFMGFGYYWNIHALWYYILFQILNGLAQTTGWPAVVTCMGNWFGKGKRGFIMGIWNSHTAVGNILGSLIAGAFVSTAWGLSFIVPGIIIAAFGIFCFFFLVEYPEDVGCTPPQQPEEAKHDLENIPVSYNSTDTIFKSTESNADDSENAHTEVEHPQAISFIGALRIPGVVEFSLCLLFAKLVSYTFLYWLPLYIANDAQFDPKAAGDLSTLFDVGGIIGGILAGGISDYTGKSAITCTIMLILTAPMLFIYNYFGQTGISTTIAMLIICGILVNGPYSLITTAVSADLGTHESLQGNAKALSTVTAIIDGSGSIGAALGPSLAGVLSSRGWNYVFYMLIAADICACLLLARLVYKEIRSLCGGERKSYTEM</sequence>
<keyword id="KW-0050">Antiport</keyword>
<keyword id="KW-0256">Endoplasmic reticulum</keyword>
<keyword id="KW-0325">Glycoprotein</keyword>
<keyword id="KW-0472">Membrane</keyword>
<keyword id="KW-1185">Reference proteome</keyword>
<keyword id="KW-0762">Sugar transport</keyword>
<keyword id="KW-0812">Transmembrane</keyword>
<keyword id="KW-1133">Transmembrane helix</keyword>
<keyword id="KW-0813">Transport</keyword>
<name>G6PT3_XENLA</name>
<organism>
    <name type="scientific">Xenopus laevis</name>
    <name type="common">African clawed frog</name>
    <dbReference type="NCBI Taxonomy" id="8355"/>
    <lineage>
        <taxon>Eukaryota</taxon>
        <taxon>Metazoa</taxon>
        <taxon>Chordata</taxon>
        <taxon>Craniata</taxon>
        <taxon>Vertebrata</taxon>
        <taxon>Euteleostomi</taxon>
        <taxon>Amphibia</taxon>
        <taxon>Batrachia</taxon>
        <taxon>Anura</taxon>
        <taxon>Pipoidea</taxon>
        <taxon>Pipidae</taxon>
        <taxon>Xenopodinae</taxon>
        <taxon>Xenopus</taxon>
        <taxon>Xenopus</taxon>
    </lineage>
</organism>
<accession>Q8AVC3</accession>
<feature type="chain" id="PRO_0000308325" description="Glucose-6-phosphate exchanger SLC37A2">
    <location>
        <begin position="1"/>
        <end position="499"/>
    </location>
</feature>
<feature type="transmembrane region" description="Helical" evidence="2">
    <location>
        <begin position="21"/>
        <end position="40"/>
    </location>
</feature>
<feature type="transmembrane region" description="Helical" evidence="2">
    <location>
        <begin position="86"/>
        <end position="106"/>
    </location>
</feature>
<feature type="transmembrane region" description="Helical" evidence="2">
    <location>
        <begin position="116"/>
        <end position="136"/>
    </location>
</feature>
<feature type="transmembrane region" description="Helical" evidence="2">
    <location>
        <begin position="143"/>
        <end position="163"/>
    </location>
</feature>
<feature type="transmembrane region" description="Helical" evidence="2">
    <location>
        <begin position="187"/>
        <end position="207"/>
    </location>
</feature>
<feature type="transmembrane region" description="Helical" evidence="2">
    <location>
        <begin position="208"/>
        <end position="228"/>
    </location>
</feature>
<feature type="transmembrane region" description="Helical" evidence="2">
    <location>
        <begin position="302"/>
        <end position="322"/>
    </location>
</feature>
<feature type="transmembrane region" description="Helical" evidence="2">
    <location>
        <begin position="334"/>
        <end position="354"/>
    </location>
</feature>
<feature type="transmembrane region" description="Helical" evidence="2">
    <location>
        <begin position="362"/>
        <end position="382"/>
    </location>
</feature>
<feature type="transmembrane region" description="Helical" evidence="2">
    <location>
        <begin position="391"/>
        <end position="411"/>
    </location>
</feature>
<feature type="transmembrane region" description="Helical" evidence="2">
    <location>
        <begin position="434"/>
        <end position="454"/>
    </location>
</feature>
<feature type="transmembrane region" description="Helical" evidence="2">
    <location>
        <begin position="458"/>
        <end position="478"/>
    </location>
</feature>
<feature type="glycosylation site" description="N-linked (GlcNAc...) asparagine" evidence="2">
    <location>
        <position position="53"/>
    </location>
</feature>
<feature type="glycosylation site" description="N-linked (GlcNAc...) asparagine" evidence="2">
    <location>
        <position position="62"/>
    </location>
</feature>
<feature type="glycosylation site" description="N-linked (GlcNAc...) asparagine" evidence="2">
    <location>
        <position position="66"/>
    </location>
</feature>
<proteinExistence type="evidence at transcript level"/>
<dbReference type="EMBL" id="BC042235">
    <property type="protein sequence ID" value="AAH42235.1"/>
    <property type="molecule type" value="mRNA"/>
</dbReference>
<dbReference type="RefSeq" id="NP_001079430.1">
    <property type="nucleotide sequence ID" value="NM_001085961.1"/>
</dbReference>
<dbReference type="SMR" id="Q8AVC3"/>
<dbReference type="GlyCosmos" id="Q8AVC3">
    <property type="glycosylation" value="3 sites, No reported glycans"/>
</dbReference>
<dbReference type="DNASU" id="379117"/>
<dbReference type="GeneID" id="379117"/>
<dbReference type="KEGG" id="xla:379117"/>
<dbReference type="AGR" id="Xenbase:XB-GENE-990254"/>
<dbReference type="CTD" id="379117"/>
<dbReference type="Xenbase" id="XB-GENE-990254">
    <property type="gene designation" value="slc37a2.L"/>
</dbReference>
<dbReference type="OMA" id="AMPYLID"/>
<dbReference type="OrthoDB" id="3639251at2759"/>
<dbReference type="Proteomes" id="UP000186698">
    <property type="component" value="Chromosome 7L"/>
</dbReference>
<dbReference type="Bgee" id="379117">
    <property type="expression patterns" value="Expressed in blastula and 19 other cell types or tissues"/>
</dbReference>
<dbReference type="GO" id="GO:0005789">
    <property type="term" value="C:endoplasmic reticulum membrane"/>
    <property type="evidence" value="ECO:0000250"/>
    <property type="project" value="UniProtKB"/>
</dbReference>
<dbReference type="GO" id="GO:0061513">
    <property type="term" value="F:glucose 6-phosphate:phosphate antiporter activity"/>
    <property type="evidence" value="ECO:0000250"/>
    <property type="project" value="UniProtKB"/>
</dbReference>
<dbReference type="GO" id="GO:0015760">
    <property type="term" value="P:glucose-6-phosphate transport"/>
    <property type="evidence" value="ECO:0000250"/>
    <property type="project" value="UniProtKB"/>
</dbReference>
<dbReference type="GO" id="GO:0035435">
    <property type="term" value="P:phosphate ion transmembrane transport"/>
    <property type="evidence" value="ECO:0000250"/>
    <property type="project" value="UniProtKB"/>
</dbReference>
<dbReference type="CDD" id="cd17344">
    <property type="entry name" value="MFS_SLC37A1_2"/>
    <property type="match status" value="1"/>
</dbReference>
<dbReference type="FunFam" id="1.20.1250.20:FF:000050">
    <property type="entry name" value="glucose-6-phosphate exchanger SLC37A2 isoform X1"/>
    <property type="match status" value="1"/>
</dbReference>
<dbReference type="FunFam" id="1.20.1250.20:FF:000028">
    <property type="entry name" value="Sugar phosphate exchanger 3 isoform 1"/>
    <property type="match status" value="1"/>
</dbReference>
<dbReference type="Gene3D" id="1.20.1250.20">
    <property type="entry name" value="MFS general substrate transporter like domains"/>
    <property type="match status" value="2"/>
</dbReference>
<dbReference type="InterPro" id="IPR011701">
    <property type="entry name" value="MFS"/>
</dbReference>
<dbReference type="InterPro" id="IPR020846">
    <property type="entry name" value="MFS_dom"/>
</dbReference>
<dbReference type="InterPro" id="IPR036259">
    <property type="entry name" value="MFS_trans_sf"/>
</dbReference>
<dbReference type="InterPro" id="IPR044740">
    <property type="entry name" value="SLC37A1_2"/>
</dbReference>
<dbReference type="InterPro" id="IPR000849">
    <property type="entry name" value="Sugar_P_transporter"/>
</dbReference>
<dbReference type="PANTHER" id="PTHR43184:SF9">
    <property type="entry name" value="GLUCOSE-6-PHOSPHATE EXCHANGER SLC37A2"/>
    <property type="match status" value="1"/>
</dbReference>
<dbReference type="PANTHER" id="PTHR43184">
    <property type="entry name" value="MAJOR FACILITATOR SUPERFAMILY TRANSPORTER 16, ISOFORM B"/>
    <property type="match status" value="1"/>
</dbReference>
<dbReference type="Pfam" id="PF07690">
    <property type="entry name" value="MFS_1"/>
    <property type="match status" value="1"/>
</dbReference>
<dbReference type="PIRSF" id="PIRSF002808">
    <property type="entry name" value="Hexose_phosphate_transp"/>
    <property type="match status" value="1"/>
</dbReference>
<dbReference type="SUPFAM" id="SSF103473">
    <property type="entry name" value="MFS general substrate transporter"/>
    <property type="match status" value="1"/>
</dbReference>
<dbReference type="PROSITE" id="PS50850">
    <property type="entry name" value="MFS"/>
    <property type="match status" value="1"/>
</dbReference>
<reference key="1">
    <citation type="submission" date="2003-01" db="EMBL/GenBank/DDBJ databases">
        <authorList>
            <consortium name="NIH - Xenopus Gene Collection (XGC) project"/>
        </authorList>
    </citation>
    <scope>NUCLEOTIDE SEQUENCE [LARGE SCALE MRNA]</scope>
    <source>
        <tissue>Embryo</tissue>
    </source>
</reference>
<gene>
    <name evidence="1" type="primary">slc37a2</name>
</gene>
<evidence type="ECO:0000250" key="1">
    <source>
        <dbReference type="UniProtKB" id="Q8TED4"/>
    </source>
</evidence>
<evidence type="ECO:0000255" key="2"/>
<evidence type="ECO:0000305" key="3"/>
<protein>
    <recommendedName>
        <fullName evidence="3">Glucose-6-phosphate exchanger SLC37A2</fullName>
    </recommendedName>
    <alternativeName>
        <fullName evidence="1">Solute carrier family 37 member 2</fullName>
    </alternativeName>
</protein>
<comment type="function">
    <text evidence="1">Inorganic phosphate and glucose-6-phosphate antiporter. May transport cytoplasmic glucose-6-phosphate into the lumen of the endoplasmic reticulum and translocate inorganic phosphate into the opposite direction.</text>
</comment>
<comment type="catalytic activity">
    <reaction evidence="1">
        <text>D-glucose 6-phosphate(in) + phosphate(out) = D-glucose 6-phosphate(out) + phosphate(in)</text>
        <dbReference type="Rhea" id="RHEA:71535"/>
        <dbReference type="ChEBI" id="CHEBI:43474"/>
        <dbReference type="ChEBI" id="CHEBI:61548"/>
    </reaction>
</comment>
<comment type="subcellular location">
    <subcellularLocation>
        <location evidence="1">Endoplasmic reticulum membrane</location>
        <topology evidence="2">Multi-pass membrane protein</topology>
    </subcellularLocation>
</comment>
<comment type="similarity">
    <text evidence="3">Belongs to the major facilitator superfamily. Organophosphate:Pi antiporter (OPA) (TC 2.A.1.4) family.</text>
</comment>